<feature type="chain" id="PRO_1000206232" description="Phosphoenolpyruvate carboxykinase [GTP]">
    <location>
        <begin position="1"/>
        <end position="621"/>
    </location>
</feature>
<feature type="active site" evidence="1">
    <location>
        <position position="273"/>
    </location>
</feature>
<feature type="binding site" evidence="1">
    <location>
        <position position="82"/>
    </location>
    <ligand>
        <name>substrate</name>
    </ligand>
</feature>
<feature type="binding site" evidence="1">
    <location>
        <begin position="220"/>
        <end position="222"/>
    </location>
    <ligand>
        <name>substrate</name>
    </ligand>
</feature>
<feature type="binding site" evidence="1">
    <location>
        <position position="229"/>
    </location>
    <ligand>
        <name>Mn(2+)</name>
        <dbReference type="ChEBI" id="CHEBI:29035"/>
    </ligand>
</feature>
<feature type="binding site" evidence="1">
    <location>
        <position position="249"/>
    </location>
    <ligand>
        <name>Mn(2+)</name>
        <dbReference type="ChEBI" id="CHEBI:29035"/>
    </ligand>
</feature>
<feature type="binding site" evidence="1">
    <location>
        <position position="271"/>
    </location>
    <ligand>
        <name>substrate</name>
    </ligand>
</feature>
<feature type="binding site" evidence="1">
    <location>
        <begin position="272"/>
        <end position="277"/>
    </location>
    <ligand>
        <name>GTP</name>
        <dbReference type="ChEBI" id="CHEBI:37565"/>
    </ligand>
</feature>
<feature type="binding site" evidence="1">
    <location>
        <position position="296"/>
    </location>
    <ligand>
        <name>Mn(2+)</name>
        <dbReference type="ChEBI" id="CHEBI:29035"/>
    </ligand>
</feature>
<feature type="binding site" evidence="1">
    <location>
        <begin position="386"/>
        <end position="388"/>
    </location>
    <ligand>
        <name>substrate</name>
    </ligand>
</feature>
<feature type="binding site" evidence="1">
    <location>
        <position position="388"/>
    </location>
    <ligand>
        <name>GTP</name>
        <dbReference type="ChEBI" id="CHEBI:37565"/>
    </ligand>
</feature>
<feature type="binding site" evidence="1">
    <location>
        <position position="419"/>
    </location>
    <ligand>
        <name>GTP</name>
        <dbReference type="ChEBI" id="CHEBI:37565"/>
    </ligand>
</feature>
<feature type="binding site" evidence="1">
    <location>
        <begin position="514"/>
        <end position="517"/>
    </location>
    <ligand>
        <name>GTP</name>
        <dbReference type="ChEBI" id="CHEBI:37565"/>
    </ligand>
</feature>
<name>PCKG_CORK4</name>
<sequence>MSAPTIPGLEGNAPTTNQDMLNWIAECAELCQPDKVVFCDGSDEEWEAIAKDLVEKGTLIKLNEEKRPNSYLASSDPADVARVESRTFICSKTEDGAGPTNNWRDPDEMRAEMSEHFKGSMKGRTMYVVPFCMGPITDPDPKLGIELTDSGYVVMSMRIMTRMGKEALDKIGDGPFVKGLHSVGAPLEPGQEDVKWPCNETKYITQFPEDRVIWSYGSGYGGNAILAKKCYALRIASVMAKDEGWMAEHMLILKLISPEGKAYHICAAFPSQCGKTNLAMIQPTIPGWKAEVIGDDIAWLHFGDDGRLYAVNPENGFFGVAPGTNYKSNPNAMKTMEAGNNIFTNVALTDDGDVWWEGLENEPDHLIDWKGKDWTPDEDCLSSHPNSRYCVPIEQCPVAAPEFNDPKGVPVDAILFGGRRPDTVPLVTEAIDWQHATFIGATLASGQTAAAAEAKVGTLRYDPMAMLPFIGYNVGDYLQHWLDIGKKGGDKLPKVFLVNWFRRGDDGRFLWPGFGENSRVLKWIVDRIEGRVDAKKTVVGYTAYSKDIDIDGLDTDPKDVKAALTAPADKWQMDLSDTEDWLKSLGPKVPQEIWDEFDFLKTRIKTANKDGNKALDNMKTK</sequence>
<dbReference type="EC" id="4.1.1.32" evidence="1"/>
<dbReference type="EMBL" id="CP001620">
    <property type="protein sequence ID" value="ACR17040.1"/>
    <property type="molecule type" value="Genomic_DNA"/>
</dbReference>
<dbReference type="RefSeq" id="WP_012730928.1">
    <property type="nucleotide sequence ID" value="NC_012704.1"/>
</dbReference>
<dbReference type="SMR" id="C4LGT5"/>
<dbReference type="STRING" id="645127.ckrop_0253"/>
<dbReference type="KEGG" id="ckp:ckrop_0253"/>
<dbReference type="eggNOG" id="COG1274">
    <property type="taxonomic scope" value="Bacteria"/>
</dbReference>
<dbReference type="HOGENOM" id="CLU_028872_1_1_11"/>
<dbReference type="OrthoDB" id="9758871at2"/>
<dbReference type="UniPathway" id="UPA00138"/>
<dbReference type="Proteomes" id="UP000001473">
    <property type="component" value="Chromosome"/>
</dbReference>
<dbReference type="GO" id="GO:0005829">
    <property type="term" value="C:cytosol"/>
    <property type="evidence" value="ECO:0007669"/>
    <property type="project" value="TreeGrafter"/>
</dbReference>
<dbReference type="GO" id="GO:0005525">
    <property type="term" value="F:GTP binding"/>
    <property type="evidence" value="ECO:0007669"/>
    <property type="project" value="UniProtKB-UniRule"/>
</dbReference>
<dbReference type="GO" id="GO:0030145">
    <property type="term" value="F:manganese ion binding"/>
    <property type="evidence" value="ECO:0007669"/>
    <property type="project" value="UniProtKB-UniRule"/>
</dbReference>
<dbReference type="GO" id="GO:0004613">
    <property type="term" value="F:phosphoenolpyruvate carboxykinase (GTP) activity"/>
    <property type="evidence" value="ECO:0007669"/>
    <property type="project" value="UniProtKB-UniRule"/>
</dbReference>
<dbReference type="GO" id="GO:0071333">
    <property type="term" value="P:cellular response to glucose stimulus"/>
    <property type="evidence" value="ECO:0007669"/>
    <property type="project" value="TreeGrafter"/>
</dbReference>
<dbReference type="GO" id="GO:0006094">
    <property type="term" value="P:gluconeogenesis"/>
    <property type="evidence" value="ECO:0007669"/>
    <property type="project" value="UniProtKB-UniRule"/>
</dbReference>
<dbReference type="GO" id="GO:0046327">
    <property type="term" value="P:glycerol biosynthetic process from pyruvate"/>
    <property type="evidence" value="ECO:0007669"/>
    <property type="project" value="TreeGrafter"/>
</dbReference>
<dbReference type="GO" id="GO:0006107">
    <property type="term" value="P:oxaloacetate metabolic process"/>
    <property type="evidence" value="ECO:0007669"/>
    <property type="project" value="TreeGrafter"/>
</dbReference>
<dbReference type="GO" id="GO:0019543">
    <property type="term" value="P:propionate catabolic process"/>
    <property type="evidence" value="ECO:0007669"/>
    <property type="project" value="TreeGrafter"/>
</dbReference>
<dbReference type="GO" id="GO:0033993">
    <property type="term" value="P:response to lipid"/>
    <property type="evidence" value="ECO:0007669"/>
    <property type="project" value="TreeGrafter"/>
</dbReference>
<dbReference type="GO" id="GO:0042594">
    <property type="term" value="P:response to starvation"/>
    <property type="evidence" value="ECO:0007669"/>
    <property type="project" value="TreeGrafter"/>
</dbReference>
<dbReference type="CDD" id="cd00819">
    <property type="entry name" value="PEPCK_GTP"/>
    <property type="match status" value="1"/>
</dbReference>
<dbReference type="FunFam" id="3.40.449.10:FF:000005">
    <property type="entry name" value="Phosphoenolpyruvate carboxykinase [GTP]"/>
    <property type="match status" value="1"/>
</dbReference>
<dbReference type="Gene3D" id="3.90.228.20">
    <property type="match status" value="1"/>
</dbReference>
<dbReference type="Gene3D" id="3.40.449.10">
    <property type="entry name" value="Phosphoenolpyruvate Carboxykinase, domain 1"/>
    <property type="match status" value="1"/>
</dbReference>
<dbReference type="Gene3D" id="2.170.8.10">
    <property type="entry name" value="Phosphoenolpyruvate Carboxykinase, domain 2"/>
    <property type="match status" value="1"/>
</dbReference>
<dbReference type="HAMAP" id="MF_00452">
    <property type="entry name" value="PEPCK_GTP"/>
    <property type="match status" value="1"/>
</dbReference>
<dbReference type="InterPro" id="IPR013035">
    <property type="entry name" value="PEP_carboxykinase_C"/>
</dbReference>
<dbReference type="InterPro" id="IPR008209">
    <property type="entry name" value="PEP_carboxykinase_GTP"/>
</dbReference>
<dbReference type="InterPro" id="IPR035077">
    <property type="entry name" value="PEP_carboxykinase_GTP_C"/>
</dbReference>
<dbReference type="InterPro" id="IPR035078">
    <property type="entry name" value="PEP_carboxykinase_GTP_N"/>
</dbReference>
<dbReference type="InterPro" id="IPR008210">
    <property type="entry name" value="PEP_carboxykinase_N"/>
</dbReference>
<dbReference type="NCBIfam" id="NF003253">
    <property type="entry name" value="PRK04210.1"/>
    <property type="match status" value="1"/>
</dbReference>
<dbReference type="PANTHER" id="PTHR11561">
    <property type="entry name" value="PHOSPHOENOLPYRUVATE CARBOXYKINASE"/>
    <property type="match status" value="1"/>
</dbReference>
<dbReference type="PANTHER" id="PTHR11561:SF0">
    <property type="entry name" value="PHOSPHOENOLPYRUVATE CARBOXYKINASE [GTP]-RELATED"/>
    <property type="match status" value="1"/>
</dbReference>
<dbReference type="Pfam" id="PF00821">
    <property type="entry name" value="PEPCK_GTP"/>
    <property type="match status" value="1"/>
</dbReference>
<dbReference type="Pfam" id="PF17297">
    <property type="entry name" value="PEPCK_N"/>
    <property type="match status" value="1"/>
</dbReference>
<dbReference type="PIRSF" id="PIRSF001348">
    <property type="entry name" value="PEP_carboxykinase_GTP"/>
    <property type="match status" value="1"/>
</dbReference>
<dbReference type="SUPFAM" id="SSF68923">
    <property type="entry name" value="PEP carboxykinase N-terminal domain"/>
    <property type="match status" value="1"/>
</dbReference>
<dbReference type="SUPFAM" id="SSF53795">
    <property type="entry name" value="PEP carboxykinase-like"/>
    <property type="match status" value="1"/>
</dbReference>
<reference key="1">
    <citation type="journal article" date="2008" name="J. Biotechnol.">
        <title>Ultrafast pyrosequencing of Corynebacterium kroppenstedtii DSM44385 revealed insights into the physiology of a lipophilic corynebacterium that lacks mycolic acids.</title>
        <authorList>
            <person name="Tauch A."/>
            <person name="Schneider J."/>
            <person name="Szczepanowski R."/>
            <person name="Tilker A."/>
            <person name="Viehoever P."/>
            <person name="Gartemann K.-H."/>
            <person name="Arnold W."/>
            <person name="Blom J."/>
            <person name="Brinkrolf K."/>
            <person name="Brune I."/>
            <person name="Goetker S."/>
            <person name="Weisshaar B."/>
            <person name="Goesmann A."/>
            <person name="Droege M."/>
            <person name="Puehler A."/>
        </authorList>
    </citation>
    <scope>NUCLEOTIDE SEQUENCE [LARGE SCALE GENOMIC DNA]</scope>
    <source>
        <strain>DSM 44385 / JCM 11950 / CIP 105744 / CCUG 35717</strain>
    </source>
</reference>
<gene>
    <name evidence="1" type="primary">pckG</name>
    <name type="ordered locus">ckrop_0253</name>
</gene>
<comment type="function">
    <text evidence="1">Catalyzes the conversion of oxaloacetate (OAA) to phosphoenolpyruvate (PEP), the rate-limiting step in the metabolic pathway that produces glucose from lactate and other precursors derived from the citric acid cycle.</text>
</comment>
<comment type="catalytic activity">
    <reaction evidence="1">
        <text>oxaloacetate + GTP = phosphoenolpyruvate + GDP + CO2</text>
        <dbReference type="Rhea" id="RHEA:10388"/>
        <dbReference type="ChEBI" id="CHEBI:16452"/>
        <dbReference type="ChEBI" id="CHEBI:16526"/>
        <dbReference type="ChEBI" id="CHEBI:37565"/>
        <dbReference type="ChEBI" id="CHEBI:58189"/>
        <dbReference type="ChEBI" id="CHEBI:58702"/>
        <dbReference type="EC" id="4.1.1.32"/>
    </reaction>
</comment>
<comment type="cofactor">
    <cofactor evidence="1">
        <name>Mn(2+)</name>
        <dbReference type="ChEBI" id="CHEBI:29035"/>
    </cofactor>
    <text evidence="1">Binds 1 Mn(2+) ion per subunit.</text>
</comment>
<comment type="pathway">
    <text evidence="1">Carbohydrate biosynthesis; gluconeogenesis.</text>
</comment>
<comment type="subunit">
    <text evidence="1">Monomer.</text>
</comment>
<comment type="subcellular location">
    <subcellularLocation>
        <location evidence="1">Cytoplasm</location>
    </subcellularLocation>
</comment>
<comment type="similarity">
    <text evidence="1">Belongs to the phosphoenolpyruvate carboxykinase [GTP] family.</text>
</comment>
<protein>
    <recommendedName>
        <fullName evidence="1">Phosphoenolpyruvate carboxykinase [GTP]</fullName>
        <shortName evidence="1">PEP carboxykinase</shortName>
        <shortName evidence="1">PEPCK</shortName>
        <ecNumber evidence="1">4.1.1.32</ecNumber>
    </recommendedName>
</protein>
<accession>C4LGT5</accession>
<organism>
    <name type="scientific">Corynebacterium kroppenstedtii (strain DSM 44385 / JCM 11950 / CIP 105744 / CCUG 35717)</name>
    <dbReference type="NCBI Taxonomy" id="645127"/>
    <lineage>
        <taxon>Bacteria</taxon>
        <taxon>Bacillati</taxon>
        <taxon>Actinomycetota</taxon>
        <taxon>Actinomycetes</taxon>
        <taxon>Mycobacteriales</taxon>
        <taxon>Corynebacteriaceae</taxon>
        <taxon>Corynebacterium</taxon>
    </lineage>
</organism>
<evidence type="ECO:0000255" key="1">
    <source>
        <dbReference type="HAMAP-Rule" id="MF_00452"/>
    </source>
</evidence>
<proteinExistence type="inferred from homology"/>
<keyword id="KW-0963">Cytoplasm</keyword>
<keyword id="KW-0210">Decarboxylase</keyword>
<keyword id="KW-0312">Gluconeogenesis</keyword>
<keyword id="KW-0342">GTP-binding</keyword>
<keyword id="KW-0456">Lyase</keyword>
<keyword id="KW-0464">Manganese</keyword>
<keyword id="KW-0479">Metal-binding</keyword>
<keyword id="KW-0547">Nucleotide-binding</keyword>
<keyword id="KW-1185">Reference proteome</keyword>